<comment type="subcellular location">
    <subcellularLocation>
        <location evidence="2">Cytoplasm</location>
        <location evidence="2">Nucleoid</location>
    </subcellularLocation>
</comment>
<comment type="similarity">
    <text evidence="2">Belongs to the YejK family.</text>
</comment>
<protein>
    <recommendedName>
        <fullName evidence="2">Nucleoid-associated protein YejK</fullName>
    </recommendedName>
</protein>
<name>NDPA_SALTY</name>
<feature type="initiator methionine" description="Removed" evidence="1">
    <location>
        <position position="1"/>
    </location>
</feature>
<feature type="chain" id="PRO_0000210917" description="Nucleoid-associated protein YejK">
    <location>
        <begin position="2"/>
        <end position="335"/>
    </location>
</feature>
<keyword id="KW-0963">Cytoplasm</keyword>
<keyword id="KW-1185">Reference proteome</keyword>
<organism>
    <name type="scientific">Salmonella typhimurium (strain LT2 / SGSC1412 / ATCC 700720)</name>
    <dbReference type="NCBI Taxonomy" id="99287"/>
    <lineage>
        <taxon>Bacteria</taxon>
        <taxon>Pseudomonadati</taxon>
        <taxon>Pseudomonadota</taxon>
        <taxon>Gammaproteobacteria</taxon>
        <taxon>Enterobacterales</taxon>
        <taxon>Enterobacteriaceae</taxon>
        <taxon>Salmonella</taxon>
    </lineage>
</organism>
<dbReference type="EMBL" id="AE006468">
    <property type="protein sequence ID" value="AAL21129.1"/>
    <property type="molecule type" value="Genomic_DNA"/>
</dbReference>
<dbReference type="RefSeq" id="NP_461170.1">
    <property type="nucleotide sequence ID" value="NC_003197.2"/>
</dbReference>
<dbReference type="RefSeq" id="WP_000050806.1">
    <property type="nucleotide sequence ID" value="NC_003197.2"/>
</dbReference>
<dbReference type="SMR" id="P67714"/>
<dbReference type="STRING" id="99287.STM2226"/>
<dbReference type="PaxDb" id="99287-STM2226"/>
<dbReference type="DNASU" id="1253748"/>
<dbReference type="GeneID" id="1253748"/>
<dbReference type="KEGG" id="stm:STM2226"/>
<dbReference type="PATRIC" id="fig|99287.12.peg.2358"/>
<dbReference type="HOGENOM" id="CLU_063050_0_1_6"/>
<dbReference type="OMA" id="FFMDFLA"/>
<dbReference type="PhylomeDB" id="P67714"/>
<dbReference type="BioCyc" id="SENT99287:STM2226-MONOMER"/>
<dbReference type="Proteomes" id="UP000001014">
    <property type="component" value="Chromosome"/>
</dbReference>
<dbReference type="GO" id="GO:0043590">
    <property type="term" value="C:bacterial nucleoid"/>
    <property type="evidence" value="ECO:0000318"/>
    <property type="project" value="GO_Central"/>
</dbReference>
<dbReference type="GO" id="GO:0005737">
    <property type="term" value="C:cytoplasm"/>
    <property type="evidence" value="ECO:0007669"/>
    <property type="project" value="UniProtKB-UniRule"/>
</dbReference>
<dbReference type="GO" id="GO:0003690">
    <property type="term" value="F:double-stranded DNA binding"/>
    <property type="evidence" value="ECO:0000318"/>
    <property type="project" value="GO_Central"/>
</dbReference>
<dbReference type="GO" id="GO:0003727">
    <property type="term" value="F:single-stranded RNA binding"/>
    <property type="evidence" value="ECO:0000318"/>
    <property type="project" value="GO_Central"/>
</dbReference>
<dbReference type="HAMAP" id="MF_00730">
    <property type="entry name" value="NdpA"/>
    <property type="match status" value="1"/>
</dbReference>
<dbReference type="InterPro" id="IPR007358">
    <property type="entry name" value="Nucleoid_associated_NdpA"/>
</dbReference>
<dbReference type="NCBIfam" id="NF001557">
    <property type="entry name" value="PRK00378.1"/>
    <property type="match status" value="1"/>
</dbReference>
<dbReference type="PANTHER" id="PTHR38772">
    <property type="match status" value="1"/>
</dbReference>
<dbReference type="PANTHER" id="PTHR38772:SF1">
    <property type="entry name" value="NUCLEOID-ASSOCIATED PROTEIN YEJK"/>
    <property type="match status" value="1"/>
</dbReference>
<dbReference type="Pfam" id="PF04245">
    <property type="entry name" value="NA37"/>
    <property type="match status" value="1"/>
</dbReference>
<accession>P67714</accession>
<accession>Q8XG52</accession>
<proteinExistence type="inferred from homology"/>
<gene>
    <name evidence="2" type="primary">yejK</name>
    <name type="ordered locus">STM2226</name>
</gene>
<sequence>MSLDINQIALHQLIKRDEQNLELVLRDSLLEPTTTVVEMVAELHRVYSAKNKAYGLFNEESELAQALRLQRQGEEDFLAFSRAATGRLRDELAKYPFADGGIVLFCHYRYLAVEYLLVTVLNNLSSMRVNENLDINPTHYLDINHADIVARIDLTEWETNPQSTRYLTFLKGRVGRKVADFFMDFLGASEGLNAKAQNRGLLQAVDDFTAEAQLDKAERQNVRQQVYSYCNEQLQAGEEIELESLSKELSGVSEVSFSEFTAEKGYELEESFPADRSTLRQLTKYAGSGGGLTINFDAMLLGERIFWDPATDTLTIKGTPPNLRDQLQRRTSGGK</sequence>
<evidence type="ECO:0000250" key="1"/>
<evidence type="ECO:0000255" key="2">
    <source>
        <dbReference type="HAMAP-Rule" id="MF_00730"/>
    </source>
</evidence>
<reference key="1">
    <citation type="journal article" date="2001" name="Nature">
        <title>Complete genome sequence of Salmonella enterica serovar Typhimurium LT2.</title>
        <authorList>
            <person name="McClelland M."/>
            <person name="Sanderson K.E."/>
            <person name="Spieth J."/>
            <person name="Clifton S.W."/>
            <person name="Latreille P."/>
            <person name="Courtney L."/>
            <person name="Porwollik S."/>
            <person name="Ali J."/>
            <person name="Dante M."/>
            <person name="Du F."/>
            <person name="Hou S."/>
            <person name="Layman D."/>
            <person name="Leonard S."/>
            <person name="Nguyen C."/>
            <person name="Scott K."/>
            <person name="Holmes A."/>
            <person name="Grewal N."/>
            <person name="Mulvaney E."/>
            <person name="Ryan E."/>
            <person name="Sun H."/>
            <person name="Florea L."/>
            <person name="Miller W."/>
            <person name="Stoneking T."/>
            <person name="Nhan M."/>
            <person name="Waterston R."/>
            <person name="Wilson R.K."/>
        </authorList>
    </citation>
    <scope>NUCLEOTIDE SEQUENCE [LARGE SCALE GENOMIC DNA]</scope>
    <source>
        <strain>LT2 / SGSC1412 / ATCC 700720</strain>
    </source>
</reference>